<evidence type="ECO:0000255" key="1">
    <source>
        <dbReference type="PROSITE-ProRule" id="PRU00108"/>
    </source>
</evidence>
<evidence type="ECO:0000256" key="2">
    <source>
        <dbReference type="SAM" id="MobiDB-lite"/>
    </source>
</evidence>
<protein>
    <recommendedName>
        <fullName>Mating-type protein A-alpha Y3</fullName>
    </recommendedName>
</protein>
<organism>
    <name type="scientific">Schizophyllum commune</name>
    <name type="common">Split gill fungus</name>
    <dbReference type="NCBI Taxonomy" id="5334"/>
    <lineage>
        <taxon>Eukaryota</taxon>
        <taxon>Fungi</taxon>
        <taxon>Dikarya</taxon>
        <taxon>Basidiomycota</taxon>
        <taxon>Agaricomycotina</taxon>
        <taxon>Agaricomycetes</taxon>
        <taxon>Agaricomycetidae</taxon>
        <taxon>Agaricales</taxon>
        <taxon>Schizophyllaceae</taxon>
        <taxon>Schizophyllum</taxon>
    </lineage>
</organism>
<name>MAAY3_SCHCO</name>
<feature type="chain" id="PRO_0000049188" description="Mating-type protein A-alpha Y3">
    <location>
        <begin position="1"/>
        <end position="926"/>
    </location>
</feature>
<feature type="DNA-binding region" description="Homeobox" evidence="1">
    <location>
        <begin position="147"/>
        <end position="206"/>
    </location>
</feature>
<feature type="region of interest" description="Disordered" evidence="2">
    <location>
        <begin position="238"/>
        <end position="281"/>
    </location>
</feature>
<feature type="region of interest" description="Disordered" evidence="2">
    <location>
        <begin position="308"/>
        <end position="374"/>
    </location>
</feature>
<feature type="region of interest" description="Disordered" evidence="2">
    <location>
        <begin position="424"/>
        <end position="452"/>
    </location>
</feature>
<feature type="region of interest" description="Disordered" evidence="2">
    <location>
        <begin position="625"/>
        <end position="734"/>
    </location>
</feature>
<feature type="compositionally biased region" description="Basic and acidic residues" evidence="2">
    <location>
        <begin position="267"/>
        <end position="281"/>
    </location>
</feature>
<feature type="compositionally biased region" description="Basic and acidic residues" evidence="2">
    <location>
        <begin position="326"/>
        <end position="338"/>
    </location>
</feature>
<feature type="compositionally biased region" description="Polar residues" evidence="2">
    <location>
        <begin position="428"/>
        <end position="441"/>
    </location>
</feature>
<feature type="compositionally biased region" description="Basic and acidic residues" evidence="2">
    <location>
        <begin position="632"/>
        <end position="660"/>
    </location>
</feature>
<feature type="compositionally biased region" description="Low complexity" evidence="2">
    <location>
        <begin position="669"/>
        <end position="687"/>
    </location>
</feature>
<feature type="compositionally biased region" description="Low complexity" evidence="2">
    <location>
        <begin position="699"/>
        <end position="724"/>
    </location>
</feature>
<sequence length="926" mass="101834">MVDRLKLLQAISTSAKDLASFALSRGASPIPQPVGLTDVTFDPLPLPDLNALHRRLKDAGLPPKTTKSAIKAYDEACSRWRSTVDESFKATASAVSPRNLHLLLSLRHHVYAQQVQKWLWQVLQVPELWKAEMAKQRAHITATMDTYKKPRPKFHSEYTPLLELYFHFNAYPTFADRRMLAEKTGMQTRQITVWFQNHRRRAKGPLPRMAPTDKIPMEEFERQRENMARKLLPVLLPSHLRPAPSGSENASPARSIPRATMSAAKSKKPDGDKEALRKVGKKALRDAAKTAKANSSTVLGALVAAGVQQAPEAKNSKKAKKAARKNAQDVEMRDATKSHEKRRKTKAMPRPAGQVPMDVDGRAHKKSTKTTSSAFDSKAELAFARMAYPAPSPYAWVHTAPKSSHVMPSAPFKDAHISDIRKLGKGKPSQNLTSTPATFSTVPPRRTSSRLNAMRPPYAFPATYDSASVPMTFAAAQTLRFSFVTDSQAFGFRQRYPLSVGEKVHSGAIDALTRRFESLRVLCAEFSTPKKQTSSFERQTLCRLRAEGLKAGEIEVRHLVAADSYAARRAITYVTPRAPLDSVVVDLPRALQLRLVKPLVPAEPIVRPDDFAPFVALAEKRAKRRARKEKKKQAEKEARKEEKRARKEAKQAKKDRKEQRAGLPRRSPSTLDSSRASSVTSDASATSRKSRTSRKPRDSSASSVASARTPSLSSTSSRRSSGTSMPATPRMNESLPVVASDNFVLGTDKDVTMTPELMAQLFGEDDASGLDEPMQSEGFSPDMLIFSSCNDGALGDMTADVNMPELGDLSDTQLSFDDMNWTSSMDLSTQPAASFDSSSETSSMDFNWLLPQCANTAPDWSALIGMTPSTTSQIHVLGGTYSCELGGTNTTNAPLNFADLSFELDAGEDCFINFDHNPLGGTMLAV</sequence>
<keyword id="KW-0238">DNA-binding</keyword>
<keyword id="KW-0371">Homeobox</keyword>
<keyword id="KW-0539">Nucleus</keyword>
<keyword id="KW-0804">Transcription</keyword>
<keyword id="KW-0805">Transcription regulation</keyword>
<accession>P37934</accession>
<reference key="1">
    <citation type="journal article" date="1992" name="Proc. Natl. Acad. Sci. U.S.A.">
        <title>The A alpha mating locus of Schizophyllum commune encodes two dissimilar multiallelic homeodomain proteins.</title>
        <authorList>
            <person name="Stankis M.M."/>
            <person name="Specht C.A."/>
            <person name="Yang H."/>
            <person name="Giasson L."/>
            <person name="Ullrich R.C."/>
            <person name="Novotny C.P."/>
        </authorList>
    </citation>
    <scope>NUCLEOTIDE SEQUENCE [GENOMIC DNA]</scope>
    <source>
        <strain>UVM 9-4</strain>
    </source>
</reference>
<proteinExistence type="evidence at transcript level"/>
<dbReference type="EMBL" id="M97180">
    <property type="protein sequence ID" value="AAB01370.1"/>
    <property type="molecule type" value="Genomic_DNA"/>
</dbReference>
<dbReference type="PIR" id="B37271">
    <property type="entry name" value="B37271"/>
</dbReference>
<dbReference type="SMR" id="P37934"/>
<dbReference type="VEuPathDB" id="FungiDB:SCHCODRAFT_02596714"/>
<dbReference type="GO" id="GO:0005634">
    <property type="term" value="C:nucleus"/>
    <property type="evidence" value="ECO:0007669"/>
    <property type="project" value="UniProtKB-SubCell"/>
</dbReference>
<dbReference type="GO" id="GO:0003677">
    <property type="term" value="F:DNA binding"/>
    <property type="evidence" value="ECO:0007669"/>
    <property type="project" value="UniProtKB-KW"/>
</dbReference>
<dbReference type="GO" id="GO:0000981">
    <property type="term" value="F:DNA-binding transcription factor activity, RNA polymerase II-specific"/>
    <property type="evidence" value="ECO:0007669"/>
    <property type="project" value="InterPro"/>
</dbReference>
<dbReference type="GO" id="GO:0019953">
    <property type="term" value="P:sexual reproduction"/>
    <property type="evidence" value="ECO:0007669"/>
    <property type="project" value="InterPro"/>
</dbReference>
<dbReference type="CDD" id="cd00086">
    <property type="entry name" value="homeodomain"/>
    <property type="match status" value="1"/>
</dbReference>
<dbReference type="Gene3D" id="1.10.10.60">
    <property type="entry name" value="Homeodomain-like"/>
    <property type="match status" value="1"/>
</dbReference>
<dbReference type="InterPro" id="IPR007689">
    <property type="entry name" value="AalphaY_mating_typ-dep-bd-dom"/>
</dbReference>
<dbReference type="InterPro" id="IPR001356">
    <property type="entry name" value="HD"/>
</dbReference>
<dbReference type="InterPro" id="IPR017970">
    <property type="entry name" value="Homeobox_CS"/>
</dbReference>
<dbReference type="InterPro" id="IPR009057">
    <property type="entry name" value="Homeodomain-like_sf"/>
</dbReference>
<dbReference type="Pfam" id="PF04611">
    <property type="entry name" value="AalphaY_MDB"/>
    <property type="match status" value="1"/>
</dbReference>
<dbReference type="Pfam" id="PF00046">
    <property type="entry name" value="Homeodomain"/>
    <property type="match status" value="1"/>
</dbReference>
<dbReference type="SMART" id="SM00389">
    <property type="entry name" value="HOX"/>
    <property type="match status" value="1"/>
</dbReference>
<dbReference type="SUPFAM" id="SSF46689">
    <property type="entry name" value="Homeodomain-like"/>
    <property type="match status" value="1"/>
</dbReference>
<dbReference type="PROSITE" id="PS00027">
    <property type="entry name" value="HOMEOBOX_1"/>
    <property type="match status" value="1"/>
</dbReference>
<dbReference type="PROSITE" id="PS50071">
    <property type="entry name" value="HOMEOBOX_2"/>
    <property type="match status" value="1"/>
</dbReference>
<comment type="function">
    <text>Specifies A-alpha-3 mating-type. May regulate the expression of genes specific to the homokaryotic cell type.</text>
</comment>
<comment type="subcellular location">
    <subcellularLocation>
        <location evidence="1">Nucleus</location>
    </subcellularLocation>
</comment>
<comment type="developmental stage">
    <text>Expressed constitutively in homokaryons.</text>
</comment>